<protein>
    <recommendedName>
        <fullName evidence="4">Dual specificity protein phosphatase YVH1</fullName>
        <shortName evidence="4">PfYVH1</shortName>
        <ecNumber evidence="3">3.1.3.16</ecNumber>
        <ecNumber evidence="3">3.1.3.48</ecNumber>
    </recommendedName>
</protein>
<name>YVH1_PLAF7</name>
<evidence type="ECO:0000255" key="1">
    <source>
        <dbReference type="PROSITE-ProRule" id="PRU00160"/>
    </source>
</evidence>
<evidence type="ECO:0000256" key="2">
    <source>
        <dbReference type="SAM" id="MobiDB-lite"/>
    </source>
</evidence>
<evidence type="ECO:0000269" key="3">
    <source>
    </source>
</evidence>
<evidence type="ECO:0000303" key="4">
    <source>
    </source>
</evidence>
<evidence type="ECO:0000305" key="5"/>
<evidence type="ECO:0000305" key="6">
    <source>
    </source>
</evidence>
<evidence type="ECO:0000312" key="7">
    <source>
        <dbReference type="EMBL" id="AAM46812.1"/>
    </source>
</evidence>
<evidence type="ECO:0000312" key="8">
    <source>
        <dbReference type="EMBL" id="CAB11119.3"/>
    </source>
</evidence>
<evidence type="ECO:0000312" key="9">
    <source>
        <dbReference type="Proteomes" id="UP000001450"/>
    </source>
</evidence>
<proteinExistence type="evidence at protein level"/>
<reference evidence="7" key="1">
    <citation type="journal article" date="2004" name="Mol. Biochem. Parasitol.">
        <title>A zinc-binding dual-specificity YVH1 phosphatase in the malaria parasite, Plasmodium falciparum, and its interaction with the nuclear protein, pescadillo.</title>
        <authorList>
            <person name="Kumar R."/>
            <person name="Musiyenko A."/>
            <person name="Cioffi E."/>
            <person name="Oldenburg A."/>
            <person name="Adams B."/>
            <person name="Bitko V."/>
            <person name="Krishna S.S."/>
            <person name="Barik S."/>
        </authorList>
    </citation>
    <scope>NUCLEOTIDE SEQUENCE [GENOMIC DNA]</scope>
    <scope>FUNCTION</scope>
    <scope>CATALYTIC ACTIVITY</scope>
    <scope>COFACTOR</scope>
    <scope>INTERACTION WITH PES</scope>
    <scope>SUBCELLULAR LOCATION</scope>
    <scope>DEVELOPMENTAL STAGE</scope>
    <scope>MUTAGENESIS OF CYS-379; CYS-476 AND CYS-530</scope>
</reference>
<reference evidence="9" key="2">
    <citation type="journal article" date="1999" name="Nature">
        <title>The complete nucleotide sequence of chromosome 3 of Plasmodium falciparum.</title>
        <authorList>
            <person name="Bowman S."/>
            <person name="Lawson D."/>
            <person name="Basham D."/>
            <person name="Brown D."/>
            <person name="Chillingworth T."/>
            <person name="Churcher C.M."/>
            <person name="Craig A."/>
            <person name="Davies R.M."/>
            <person name="Devlin K."/>
            <person name="Feltwell T."/>
            <person name="Gentles S."/>
            <person name="Gwilliam R."/>
            <person name="Hamlin N."/>
            <person name="Harris D."/>
            <person name="Holroyd S."/>
            <person name="Hornsby T."/>
            <person name="Horrocks P."/>
            <person name="Jagels K."/>
            <person name="Jassal B."/>
            <person name="Kyes S."/>
            <person name="McLean J."/>
            <person name="Moule S."/>
            <person name="Mungall K.L."/>
            <person name="Murphy L."/>
            <person name="Oliver K."/>
            <person name="Quail M.A."/>
            <person name="Rajandream M.A."/>
            <person name="Rutter S."/>
            <person name="Skelton J."/>
            <person name="Squares R."/>
            <person name="Squares S."/>
            <person name="Sulston J.E."/>
            <person name="Whitehead S."/>
            <person name="Woodward J.R."/>
            <person name="Newbold C."/>
            <person name="Barrell B.G."/>
        </authorList>
    </citation>
    <scope>NUCLEOTIDE SEQUENCE [LARGE SCALE GENOMIC DNA]</scope>
    <source>
        <strain evidence="9">3D7</strain>
    </source>
</reference>
<reference evidence="9" key="3">
    <citation type="journal article" date="2002" name="Nature">
        <title>Genome sequence of the human malaria parasite Plasmodium falciparum.</title>
        <authorList>
            <person name="Gardner M.J."/>
            <person name="Hall N."/>
            <person name="Fung E."/>
            <person name="White O."/>
            <person name="Berriman M."/>
            <person name="Hyman R.W."/>
            <person name="Carlton J.M."/>
            <person name="Pain A."/>
            <person name="Nelson K.E."/>
            <person name="Bowman S."/>
            <person name="Paulsen I.T."/>
            <person name="James K.D."/>
            <person name="Eisen J.A."/>
            <person name="Rutherford K.M."/>
            <person name="Salzberg S.L."/>
            <person name="Craig A."/>
            <person name="Kyes S."/>
            <person name="Chan M.-S."/>
            <person name="Nene V."/>
            <person name="Shallom S.J."/>
            <person name="Suh B."/>
            <person name="Peterson J."/>
            <person name="Angiuoli S."/>
            <person name="Pertea M."/>
            <person name="Allen J."/>
            <person name="Selengut J."/>
            <person name="Haft D."/>
            <person name="Mather M.W."/>
            <person name="Vaidya A.B."/>
            <person name="Martin D.M.A."/>
            <person name="Fairlamb A.H."/>
            <person name="Fraunholz M.J."/>
            <person name="Roos D.S."/>
            <person name="Ralph S.A."/>
            <person name="McFadden G.I."/>
            <person name="Cummings L.M."/>
            <person name="Subramanian G.M."/>
            <person name="Mungall C."/>
            <person name="Venter J.C."/>
            <person name="Carucci D.J."/>
            <person name="Hoffman S.L."/>
            <person name="Newbold C."/>
            <person name="Davis R.W."/>
            <person name="Fraser C.M."/>
            <person name="Barrell B.G."/>
        </authorList>
    </citation>
    <scope>NUCLEOTIDE SEQUENCE [LARGE SCALE GENOMIC DNA]</scope>
    <source>
        <strain evidence="9">3D7</strain>
    </source>
</reference>
<reference evidence="9" key="4">
    <citation type="journal article" date="2002" name="Nature">
        <title>Sequence of Plasmodium falciparum chromosomes 1, 3-9 and 13.</title>
        <authorList>
            <person name="Hall N."/>
            <person name="Pain A."/>
            <person name="Berriman M."/>
            <person name="Churcher C.M."/>
            <person name="Harris B."/>
            <person name="Harris D."/>
            <person name="Mungall K.L."/>
            <person name="Bowman S."/>
            <person name="Atkin R."/>
            <person name="Baker S."/>
            <person name="Barron A."/>
            <person name="Brooks K."/>
            <person name="Buckee C.O."/>
            <person name="Burrows C."/>
            <person name="Cherevach I."/>
            <person name="Chillingworth C."/>
            <person name="Chillingworth T."/>
            <person name="Christodoulou Z."/>
            <person name="Clark L."/>
            <person name="Clark R."/>
            <person name="Corton C."/>
            <person name="Cronin A."/>
            <person name="Davies R.M."/>
            <person name="Davis P."/>
            <person name="Dear P."/>
            <person name="Dearden F."/>
            <person name="Doggett J."/>
            <person name="Feltwell T."/>
            <person name="Goble A."/>
            <person name="Goodhead I."/>
            <person name="Gwilliam R."/>
            <person name="Hamlin N."/>
            <person name="Hance Z."/>
            <person name="Harper D."/>
            <person name="Hauser H."/>
            <person name="Hornsby T."/>
            <person name="Holroyd S."/>
            <person name="Horrocks P."/>
            <person name="Humphray S."/>
            <person name="Jagels K."/>
            <person name="James K.D."/>
            <person name="Johnson D."/>
            <person name="Kerhornou A."/>
            <person name="Knights A."/>
            <person name="Konfortov B."/>
            <person name="Kyes S."/>
            <person name="Larke N."/>
            <person name="Lawson D."/>
            <person name="Lennard N."/>
            <person name="Line A."/>
            <person name="Maddison M."/>
            <person name="Mclean J."/>
            <person name="Mooney P."/>
            <person name="Moule S."/>
            <person name="Murphy L."/>
            <person name="Oliver K."/>
            <person name="Ormond D."/>
            <person name="Price C."/>
            <person name="Quail M.A."/>
            <person name="Rabbinowitsch E."/>
            <person name="Rajandream M.A."/>
            <person name="Rutter S."/>
            <person name="Rutherford K.M."/>
            <person name="Sanders M."/>
            <person name="Simmonds M."/>
            <person name="Seeger K."/>
            <person name="Sharp S."/>
            <person name="Smith R."/>
            <person name="Squares R."/>
            <person name="Squares S."/>
            <person name="Stevens K."/>
            <person name="Taylor K."/>
            <person name="Tivey A."/>
            <person name="Unwin L."/>
            <person name="Whitehead S."/>
            <person name="Woodward J.R."/>
            <person name="Sulston J.E."/>
            <person name="Craig A."/>
            <person name="Newbold C."/>
            <person name="Barrell B.G."/>
        </authorList>
    </citation>
    <scope>NUCLEOTIDE SEQUENCE [LARGE SCALE GENOMIC DNA]</scope>
    <source>
        <strain evidence="9">3D7</strain>
    </source>
</reference>
<comment type="function">
    <text evidence="3">Dual specificity protein phosphatase which dephosphorylates both phosphotyrosine and phosphoserine residues.</text>
</comment>
<comment type="catalytic activity">
    <reaction evidence="3">
        <text>O-phospho-L-tyrosyl-[protein] + H2O = L-tyrosyl-[protein] + phosphate</text>
        <dbReference type="Rhea" id="RHEA:10684"/>
        <dbReference type="Rhea" id="RHEA-COMP:10136"/>
        <dbReference type="Rhea" id="RHEA-COMP:20101"/>
        <dbReference type="ChEBI" id="CHEBI:15377"/>
        <dbReference type="ChEBI" id="CHEBI:43474"/>
        <dbReference type="ChEBI" id="CHEBI:46858"/>
        <dbReference type="ChEBI" id="CHEBI:61978"/>
        <dbReference type="EC" id="3.1.3.48"/>
    </reaction>
    <physiologicalReaction direction="left-to-right" evidence="3">
        <dbReference type="Rhea" id="RHEA:10685"/>
    </physiologicalReaction>
</comment>
<comment type="catalytic activity">
    <reaction evidence="3">
        <text>O-phospho-L-seryl-[protein] + H2O = L-seryl-[protein] + phosphate</text>
        <dbReference type="Rhea" id="RHEA:20629"/>
        <dbReference type="Rhea" id="RHEA-COMP:9863"/>
        <dbReference type="Rhea" id="RHEA-COMP:11604"/>
        <dbReference type="ChEBI" id="CHEBI:15377"/>
        <dbReference type="ChEBI" id="CHEBI:29999"/>
        <dbReference type="ChEBI" id="CHEBI:43474"/>
        <dbReference type="ChEBI" id="CHEBI:83421"/>
        <dbReference type="EC" id="3.1.3.16"/>
    </reaction>
    <physiologicalReaction direction="left-to-right" evidence="3">
        <dbReference type="Rhea" id="RHEA:20630"/>
    </physiologicalReaction>
</comment>
<comment type="cofactor">
    <cofactor evidence="3">
        <name>Zn(2+)</name>
        <dbReference type="ChEBI" id="CHEBI:29105"/>
    </cofactor>
    <text evidence="3">Binds 2 Zn(2+) ions.</text>
</comment>
<comment type="subunit">
    <text evidence="3">Interacts with PES.</text>
</comment>
<comment type="subcellular location">
    <subcellularLocation>
        <location evidence="3">Cytoplasm</location>
    </subcellularLocation>
    <subcellularLocation>
        <location evidence="3">Nucleus</location>
    </subcellularLocation>
    <text evidence="3">Localizes to the cytoplasm at the ring stage, translocates to the nucleus in the trophozoite stage and returns to the cytoplasm at the schizont stage.</text>
</comment>
<comment type="developmental stage">
    <text evidence="3">Expressed during the parasite blood stage, including in rings, trophozoites and schizonts (at protein level) (PubMed:14698441). Expressed in gametocytes (at protein level) (PubMed:14698441).</text>
</comment>
<comment type="similarity">
    <text evidence="5">Belongs to the protein-tyrosine phosphatase family. Non-receptor class dual specificity subfamily.</text>
</comment>
<comment type="sequence caution" evidence="5">
    <conflict type="erroneous gene model prediction">
        <sequence resource="EMBL-CDS" id="AAM46812"/>
    </conflict>
</comment>
<organism evidence="9">
    <name type="scientific">Plasmodium falciparum (isolate 3D7)</name>
    <dbReference type="NCBI Taxonomy" id="36329"/>
    <lineage>
        <taxon>Eukaryota</taxon>
        <taxon>Sar</taxon>
        <taxon>Alveolata</taxon>
        <taxon>Apicomplexa</taxon>
        <taxon>Aconoidasida</taxon>
        <taxon>Haemosporida</taxon>
        <taxon>Plasmodiidae</taxon>
        <taxon>Plasmodium</taxon>
        <taxon>Plasmodium (Laverania)</taxon>
    </lineage>
</organism>
<sequence>MIVKVFDYIYISNVYNANDIYELIKLNIGGVLTCFDCTCIEWCHHNDTNVTNKIFYKDIFVNTKKDLIKCDVPIITNKSVNSDIIGGTHQINNYYNEQNNNYHDNTYKEFTQTHKTNIDPSQIKSDHINEERKEHYDYIIFPSDIINNTQCNNNNLKDYIKSMLILKEDAYIDFDVIHMDQLKNKHNNNNNNNNNNNNNNNNNNNNNNCCTFKNPDISNTSQHHVEHIQIHKSNSHSNIPSDNINFCNKKYDKNLSRSVEISEKDKHPENSLLYEFVNKDKLNYKINQEEDTVSSEKNKLCDNNNNNNMVHTRHIYNVCELNKCLRENKLIPYNNIYKMKHLYLNILDTFDENILKHVNKAHLFIDSVIQKKKNILIHCMAGISRCSSIILSYVSKKNKKGIEYNFNLLKSKYPFAHPNENFYRQLLLYEKMNYTLDGCTDYHNIYKKIKMNRENLEELKILNLKNDKQPIYNFRCKHCNYVLFNDNEIIKHDFKISKIKKNYGNSCTSIFIEKKEWILTENKMKGVLNCPNVNCNIKLGKWSWTGICCSCGYLQIPAFMINSSNVDRMNISKTV</sequence>
<gene>
    <name evidence="4" type="primary">YVH1</name>
    <name evidence="8" type="ORF">PF3D7_0309000</name>
</gene>
<accession>O77334</accession>
<accession>Q8MVQ8</accession>
<dbReference type="EC" id="3.1.3.16" evidence="3"/>
<dbReference type="EC" id="3.1.3.48" evidence="3"/>
<dbReference type="EMBL" id="AF482703">
    <property type="protein sequence ID" value="AAM46812.1"/>
    <property type="status" value="ALT_SEQ"/>
    <property type="molecule type" value="Genomic_DNA"/>
</dbReference>
<dbReference type="EMBL" id="AL844502">
    <property type="protein sequence ID" value="CAB11119.3"/>
    <property type="molecule type" value="Genomic_DNA"/>
</dbReference>
<dbReference type="PIR" id="T18439">
    <property type="entry name" value="T18439"/>
</dbReference>
<dbReference type="RefSeq" id="XP_001351164.1">
    <property type="nucleotide sequence ID" value="XM_001351128.1"/>
</dbReference>
<dbReference type="SMR" id="O77334"/>
<dbReference type="STRING" id="36329.O77334"/>
<dbReference type="PaxDb" id="5833-PFC0380w"/>
<dbReference type="EnsemblProtists" id="CAB11119">
    <property type="protein sequence ID" value="CAB11119"/>
    <property type="gene ID" value="PF3D7_0309000"/>
</dbReference>
<dbReference type="GeneID" id="814406"/>
<dbReference type="KEGG" id="pfa:PF3D7_0309000"/>
<dbReference type="VEuPathDB" id="PlasmoDB:PF3D7_0309000"/>
<dbReference type="VEuPathDB" id="PlasmoDB:Pf7G8-2_000078400"/>
<dbReference type="VEuPathDB" id="PlasmoDB:Pf7G8_030014800"/>
<dbReference type="VEuPathDB" id="PlasmoDB:PfCD01_030014400"/>
<dbReference type="VEuPathDB" id="PlasmoDB:PfDd2_030014000"/>
<dbReference type="VEuPathDB" id="PlasmoDB:PfGA01_030015600"/>
<dbReference type="VEuPathDB" id="PlasmoDB:PfGB4_030014600"/>
<dbReference type="VEuPathDB" id="PlasmoDB:PfGN01_030014600"/>
<dbReference type="VEuPathDB" id="PlasmoDB:PfHB3_030012800"/>
<dbReference type="VEuPathDB" id="PlasmoDB:PfIT_030013800"/>
<dbReference type="VEuPathDB" id="PlasmoDB:PfKE01_030013400"/>
<dbReference type="VEuPathDB" id="PlasmoDB:PfKH01_030013900"/>
<dbReference type="VEuPathDB" id="PlasmoDB:PfKH02_030014500"/>
<dbReference type="VEuPathDB" id="PlasmoDB:PfML01_030014000"/>
<dbReference type="VEuPathDB" id="PlasmoDB:PfNF135_030014000"/>
<dbReference type="VEuPathDB" id="PlasmoDB:PfNF166_030012300"/>
<dbReference type="VEuPathDB" id="PlasmoDB:PfNF54_030014000"/>
<dbReference type="VEuPathDB" id="PlasmoDB:PfSD01_030014100"/>
<dbReference type="VEuPathDB" id="PlasmoDB:PfSN01_030014700"/>
<dbReference type="VEuPathDB" id="PlasmoDB:PfTG01_030015400"/>
<dbReference type="HOGENOM" id="CLU_524288_0_0_1"/>
<dbReference type="InParanoid" id="O77334"/>
<dbReference type="OMA" id="YPFAHPN"/>
<dbReference type="OrthoDB" id="2017893at2759"/>
<dbReference type="PhylomeDB" id="O77334"/>
<dbReference type="Proteomes" id="UP000001450">
    <property type="component" value="Chromosome 3"/>
</dbReference>
<dbReference type="GO" id="GO:0005737">
    <property type="term" value="C:cytoplasm"/>
    <property type="evidence" value="ECO:0000314"/>
    <property type="project" value="UniProtKB"/>
</dbReference>
<dbReference type="GO" id="GO:0005634">
    <property type="term" value="C:nucleus"/>
    <property type="evidence" value="ECO:0000314"/>
    <property type="project" value="UniProtKB"/>
</dbReference>
<dbReference type="GO" id="GO:0004722">
    <property type="term" value="F:protein serine/threonine phosphatase activity"/>
    <property type="evidence" value="ECO:0000314"/>
    <property type="project" value="UniProtKB"/>
</dbReference>
<dbReference type="GO" id="GO:0004725">
    <property type="term" value="F:protein tyrosine phosphatase activity"/>
    <property type="evidence" value="ECO:0000314"/>
    <property type="project" value="UniProtKB"/>
</dbReference>
<dbReference type="GO" id="GO:0008138">
    <property type="term" value="F:protein tyrosine/serine/threonine phosphatase activity"/>
    <property type="evidence" value="ECO:0000314"/>
    <property type="project" value="GeneDB"/>
</dbReference>
<dbReference type="GO" id="GO:0017056">
    <property type="term" value="F:structural constituent of nuclear pore"/>
    <property type="evidence" value="ECO:0000314"/>
    <property type="project" value="GeneDB"/>
</dbReference>
<dbReference type="GO" id="GO:0008270">
    <property type="term" value="F:zinc ion binding"/>
    <property type="evidence" value="ECO:0000314"/>
    <property type="project" value="UniProtKB"/>
</dbReference>
<dbReference type="GO" id="GO:0046823">
    <property type="term" value="P:negative regulation of nucleocytoplasmic transport"/>
    <property type="evidence" value="ECO:0000314"/>
    <property type="project" value="GeneDB"/>
</dbReference>
<dbReference type="GO" id="GO:0070262">
    <property type="term" value="P:peptidyl-serine dephosphorylation"/>
    <property type="evidence" value="ECO:0000314"/>
    <property type="project" value="UniProtKB"/>
</dbReference>
<dbReference type="GO" id="GO:0006468">
    <property type="term" value="P:protein phosphorylation"/>
    <property type="evidence" value="ECO:0000314"/>
    <property type="project" value="GeneDB"/>
</dbReference>
<dbReference type="GO" id="GO:0060284">
    <property type="term" value="P:regulation of cell development"/>
    <property type="evidence" value="ECO:0000314"/>
    <property type="project" value="GeneDB"/>
</dbReference>
<dbReference type="CDD" id="cd14498">
    <property type="entry name" value="DSP"/>
    <property type="match status" value="1"/>
</dbReference>
<dbReference type="Gene3D" id="3.90.190.10">
    <property type="entry name" value="Protein tyrosine phosphatase superfamily"/>
    <property type="match status" value="1"/>
</dbReference>
<dbReference type="InterPro" id="IPR000340">
    <property type="entry name" value="Dual-sp_phosphatase_cat-dom"/>
</dbReference>
<dbReference type="InterPro" id="IPR029021">
    <property type="entry name" value="Prot-tyrosine_phosphatase-like"/>
</dbReference>
<dbReference type="InterPro" id="IPR016130">
    <property type="entry name" value="Tyr_Pase_AS"/>
</dbReference>
<dbReference type="InterPro" id="IPR000387">
    <property type="entry name" value="Tyr_Pase_dom"/>
</dbReference>
<dbReference type="InterPro" id="IPR020422">
    <property type="entry name" value="TYR_PHOSPHATASE_DUAL_dom"/>
</dbReference>
<dbReference type="PANTHER" id="PTHR45848:SF4">
    <property type="entry name" value="DUAL SPECIFICITY PROTEIN PHOSPHATASE 12"/>
    <property type="match status" value="1"/>
</dbReference>
<dbReference type="PANTHER" id="PTHR45848">
    <property type="entry name" value="DUAL SPECIFICITY PROTEIN PHOSPHATASE 12 FAMILY MEMBER"/>
    <property type="match status" value="1"/>
</dbReference>
<dbReference type="Pfam" id="PF00782">
    <property type="entry name" value="DSPc"/>
    <property type="match status" value="1"/>
</dbReference>
<dbReference type="SMART" id="SM00195">
    <property type="entry name" value="DSPc"/>
    <property type="match status" value="1"/>
</dbReference>
<dbReference type="SUPFAM" id="SSF52799">
    <property type="entry name" value="(Phosphotyrosine protein) phosphatases II"/>
    <property type="match status" value="1"/>
</dbReference>
<dbReference type="PROSITE" id="PS00383">
    <property type="entry name" value="TYR_PHOSPHATASE_1"/>
    <property type="match status" value="1"/>
</dbReference>
<dbReference type="PROSITE" id="PS50056">
    <property type="entry name" value="TYR_PHOSPHATASE_2"/>
    <property type="match status" value="1"/>
</dbReference>
<dbReference type="PROSITE" id="PS50054">
    <property type="entry name" value="TYR_PHOSPHATASE_DUAL"/>
    <property type="match status" value="1"/>
</dbReference>
<feature type="chain" id="PRO_0000455111" description="Dual specificity protein phosphatase YVH1">
    <location>
        <begin position="1"/>
        <end position="575"/>
    </location>
</feature>
<feature type="domain" description="Tyrosine-protein phosphatase" evidence="1">
    <location>
        <begin position="283"/>
        <end position="435"/>
    </location>
</feature>
<feature type="region of interest" description="Disordered" evidence="2">
    <location>
        <begin position="185"/>
        <end position="213"/>
    </location>
</feature>
<feature type="compositionally biased region" description="Low complexity" evidence="2">
    <location>
        <begin position="187"/>
        <end position="208"/>
    </location>
</feature>
<feature type="active site" description="Phosphocysteine intermediate" evidence="1">
    <location>
        <position position="379"/>
    </location>
</feature>
<feature type="binding site" evidence="6">
    <location>
        <position position="476"/>
    </location>
    <ligand>
        <name>Zn(2+)</name>
        <dbReference type="ChEBI" id="CHEBI:29105"/>
    </ligand>
</feature>
<feature type="binding site" evidence="6">
    <location>
        <position position="530"/>
    </location>
    <ligand>
        <name>Zn(2+)</name>
        <dbReference type="ChEBI" id="CHEBI:29105"/>
    </ligand>
</feature>
<feature type="mutagenesis site" description="Loss of catalytic activity." evidence="3">
    <original>C</original>
    <variation>S</variation>
    <location>
        <position position="379"/>
    </location>
</feature>
<feature type="mutagenesis site" description="Severe loss of catalytic activity." evidence="3">
    <original>C</original>
    <variation>S</variation>
    <location>
        <position position="476"/>
    </location>
</feature>
<feature type="mutagenesis site" description="Severe loss of catalytic activity." evidence="3">
    <original>C</original>
    <variation>S</variation>
    <location>
        <position position="530"/>
    </location>
</feature>
<keyword id="KW-0963">Cytoplasm</keyword>
<keyword id="KW-0378">Hydrolase</keyword>
<keyword id="KW-0479">Metal-binding</keyword>
<keyword id="KW-0539">Nucleus</keyword>
<keyword id="KW-0904">Protein phosphatase</keyword>
<keyword id="KW-1185">Reference proteome</keyword>
<keyword id="KW-0862">Zinc</keyword>